<dbReference type="EMBL" id="X06371">
    <property type="protein sequence ID" value="CAA29672.1"/>
    <property type="molecule type" value="Genomic_RNA"/>
</dbReference>
<dbReference type="EMBL" id="AJ271965">
    <property type="protein sequence ID" value="CAB91148.1"/>
    <property type="molecule type" value="Genomic_RNA"/>
</dbReference>
<dbReference type="EMBL" id="X12800">
    <property type="protein sequence ID" value="CAA31288.1"/>
    <property type="molecule type" value="Genomic_DNA"/>
</dbReference>
<dbReference type="PIR" id="S01741">
    <property type="entry name" value="S01741"/>
</dbReference>
<dbReference type="Proteomes" id="UP000001440">
    <property type="component" value="Segment"/>
</dbReference>
<dbReference type="GO" id="GO:0044178">
    <property type="term" value="C:host cell Golgi membrane"/>
    <property type="evidence" value="ECO:0007669"/>
    <property type="project" value="UniProtKB-SubCell"/>
</dbReference>
<dbReference type="GO" id="GO:0016020">
    <property type="term" value="C:membrane"/>
    <property type="evidence" value="ECO:0007669"/>
    <property type="project" value="UniProtKB-UniRule"/>
</dbReference>
<dbReference type="GO" id="GO:0140975">
    <property type="term" value="P:disruption of cellular anatomical structure in another organism"/>
    <property type="evidence" value="ECO:0007669"/>
    <property type="project" value="UniProtKB-UniRule"/>
</dbReference>
<dbReference type="GO" id="GO:0046760">
    <property type="term" value="P:viral budding from Golgi membrane"/>
    <property type="evidence" value="ECO:0007669"/>
    <property type="project" value="UniProtKB-UniRule"/>
</dbReference>
<dbReference type="HAMAP" id="MF_04205">
    <property type="entry name" value="ALPHA_CORONA_E"/>
    <property type="match status" value="1"/>
</dbReference>
<dbReference type="InterPro" id="IPR043507">
    <property type="entry name" value="E_protein_aCoV"/>
</dbReference>
<dbReference type="InterPro" id="IPR003873">
    <property type="entry name" value="E_protein_CoV"/>
</dbReference>
<dbReference type="Pfam" id="PF02723">
    <property type="entry name" value="CoV_E"/>
    <property type="match status" value="1"/>
</dbReference>
<dbReference type="PROSITE" id="PS51926">
    <property type="entry name" value="COV_E"/>
    <property type="match status" value="1"/>
</dbReference>
<proteinExistence type="inferred from homology"/>
<feature type="chain" id="PRO_0000106090" description="Envelope small membrane protein">
    <location>
        <begin position="1"/>
        <end position="82"/>
    </location>
</feature>
<feature type="topological domain" description="Virion surface" evidence="1">
    <location>
        <begin position="1"/>
        <end position="19"/>
    </location>
</feature>
<feature type="transmembrane region" description="Helical" evidence="1">
    <location>
        <begin position="20"/>
        <end position="40"/>
    </location>
</feature>
<feature type="topological domain" description="Intravirion" evidence="1">
    <location>
        <begin position="41"/>
        <end position="82"/>
    </location>
</feature>
<name>VEMP_CVPPU</name>
<organism>
    <name type="scientific">Porcine transmissible gastroenteritis coronavirus (strain Purdue)</name>
    <name type="common">TGEV</name>
    <dbReference type="NCBI Taxonomy" id="11151"/>
    <lineage>
        <taxon>Viruses</taxon>
        <taxon>Riboviria</taxon>
        <taxon>Orthornavirae</taxon>
        <taxon>Pisuviricota</taxon>
        <taxon>Pisoniviricetes</taxon>
        <taxon>Nidovirales</taxon>
        <taxon>Cornidovirineae</taxon>
        <taxon>Coronaviridae</taxon>
        <taxon>Orthocoronavirinae</taxon>
        <taxon>Alphacoronavirus</taxon>
        <taxon>Tegacovirus</taxon>
        <taxon>Alphacoronavirus 1</taxon>
    </lineage>
</organism>
<sequence length="82" mass="9239">MTFPRALTVIDDNGMVINIIFWFLLIIILILLSIALLNIIKLCMVCCNLGRTVIIVPAQHAYDAYKNFMRIKAYNPDGALLA</sequence>
<accession>P09048</accession>
<organismHost>
    <name type="scientific">Sus scrofa</name>
    <name type="common">Pig</name>
    <dbReference type="NCBI Taxonomy" id="9823"/>
</organismHost>
<gene>
    <name evidence="1" type="primary">E</name>
    <name type="synonym">sM</name>
    <name type="ORF">4</name>
</gene>
<protein>
    <recommendedName>
        <fullName evidence="1">Envelope small membrane protein</fullName>
        <shortName evidence="1">E protein</shortName>
        <shortName evidence="1">sM protein</shortName>
    </recommendedName>
</protein>
<evidence type="ECO:0000255" key="1">
    <source>
        <dbReference type="HAMAP-Rule" id="MF_04205"/>
    </source>
</evidence>
<reference key="1">
    <citation type="journal article" date="1987" name="Biochimie">
        <title>Enteric coronavirus TGEV: partial sequence of the genomic RNA, its organization and expression.</title>
        <authorList>
            <person name="Rasschaert D."/>
            <person name="Gelfi J."/>
            <person name="Laude H."/>
        </authorList>
    </citation>
    <scope>NUCLEOTIDE SEQUENCE</scope>
</reference>
<reference key="2">
    <citation type="journal article" date="2000" name="Proc. Natl. Acad. Sci. U.S.A.">
        <title>Engineering the largest RNA virus genome as an infectious bacterial artificial chromosome.</title>
        <authorList>
            <person name="Almazan F."/>
            <person name="Gonzalez J.M."/>
            <person name="Penzes Z."/>
            <person name="Izeta A."/>
            <person name="Calvo E."/>
            <person name="Plana-Duran J."/>
            <person name="Enjuanes L."/>
        </authorList>
    </citation>
    <scope>NUCLEOTIDE SEQUENCE</scope>
</reference>
<reference key="3">
    <citation type="submission" date="1988-09" db="EMBL/GenBank/DDBJ databases">
        <authorList>
            <person name="Kapke P.A."/>
            <person name="Tung F.Y.T."/>
            <person name="Brian D.A."/>
        </authorList>
    </citation>
    <scope>NUCLEOTIDE SEQUENCE</scope>
</reference>
<comment type="function">
    <text evidence="1">Plays a central role in virus morphogenesis and assembly. Acts as a viroporin and self-assembles in host membranes forming pentameric protein-lipid pores that allow ion transport. Also plays a role in the induction of apoptosis.</text>
</comment>
<comment type="subunit">
    <text evidence="1">Homopentamer. Interacts with membrane protein M in the budding compartment of the host cell, which is located between endoplasmic reticulum and the Golgi complex. Interacts with Nucleoprotein.</text>
</comment>
<comment type="subcellular location">
    <subcellularLocation>
        <location evidence="1">Host Golgi apparatus membrane</location>
        <topology evidence="1">Single-pass type III membrane protein</topology>
    </subcellularLocation>
    <text evidence="1">The cytoplasmic tail functions as a Golgi complex-targeting signal.</text>
</comment>
<comment type="similarity">
    <text evidence="1">Belongs to the alphacoronaviruses E protein family.</text>
</comment>
<keyword id="KW-0053">Apoptosis</keyword>
<keyword id="KW-1040">Host Golgi apparatus</keyword>
<keyword id="KW-1043">Host membrane</keyword>
<keyword id="KW-0472">Membrane</keyword>
<keyword id="KW-1185">Reference proteome</keyword>
<keyword id="KW-0812">Transmembrane</keyword>
<keyword id="KW-1133">Transmembrane helix</keyword>